<accession>B1I545</accession>
<evidence type="ECO:0000255" key="1">
    <source>
        <dbReference type="HAMAP-Rule" id="MF_00197"/>
    </source>
</evidence>
<comment type="function">
    <text evidence="1">Catalyzes the stereoinversion of LL-2,6-diaminopimelate (L,L-DAP) to meso-diaminopimelate (meso-DAP), a precursor of L-lysine and an essential component of the bacterial peptidoglycan.</text>
</comment>
<comment type="catalytic activity">
    <reaction evidence="1">
        <text>(2S,6S)-2,6-diaminopimelate = meso-2,6-diaminopimelate</text>
        <dbReference type="Rhea" id="RHEA:15393"/>
        <dbReference type="ChEBI" id="CHEBI:57609"/>
        <dbReference type="ChEBI" id="CHEBI:57791"/>
        <dbReference type="EC" id="5.1.1.7"/>
    </reaction>
</comment>
<comment type="pathway">
    <text evidence="1">Amino-acid biosynthesis; L-lysine biosynthesis via DAP pathway; DL-2,6-diaminopimelate from LL-2,6-diaminopimelate: step 1/1.</text>
</comment>
<comment type="subunit">
    <text evidence="1">Homodimer.</text>
</comment>
<comment type="subcellular location">
    <subcellularLocation>
        <location evidence="1">Cytoplasm</location>
    </subcellularLocation>
</comment>
<comment type="similarity">
    <text evidence="1">Belongs to the diaminopimelate epimerase family.</text>
</comment>
<organism>
    <name type="scientific">Desulforudis audaxviator (strain MP104C)</name>
    <dbReference type="NCBI Taxonomy" id="477974"/>
    <lineage>
        <taxon>Bacteria</taxon>
        <taxon>Bacillati</taxon>
        <taxon>Bacillota</taxon>
        <taxon>Clostridia</taxon>
        <taxon>Thermoanaerobacterales</taxon>
        <taxon>Candidatus Desulforudaceae</taxon>
        <taxon>Candidatus Desulforudis</taxon>
    </lineage>
</organism>
<feature type="chain" id="PRO_1000099231" description="Diaminopimelate epimerase">
    <location>
        <begin position="1"/>
        <end position="278"/>
    </location>
</feature>
<feature type="active site" description="Proton donor" evidence="1">
    <location>
        <position position="72"/>
    </location>
</feature>
<feature type="active site" description="Proton acceptor" evidence="1">
    <location>
        <position position="220"/>
    </location>
</feature>
<feature type="binding site" evidence="1">
    <location>
        <position position="11"/>
    </location>
    <ligand>
        <name>substrate</name>
    </ligand>
</feature>
<feature type="binding site" evidence="1">
    <location>
        <position position="63"/>
    </location>
    <ligand>
        <name>substrate</name>
    </ligand>
</feature>
<feature type="binding site" evidence="1">
    <location>
        <begin position="73"/>
        <end position="74"/>
    </location>
    <ligand>
        <name>substrate</name>
    </ligand>
</feature>
<feature type="binding site" evidence="1">
    <location>
        <position position="160"/>
    </location>
    <ligand>
        <name>substrate</name>
    </ligand>
</feature>
<feature type="binding site" evidence="1">
    <location>
        <position position="193"/>
    </location>
    <ligand>
        <name>substrate</name>
    </ligand>
</feature>
<feature type="binding site" evidence="1">
    <location>
        <begin position="211"/>
        <end position="212"/>
    </location>
    <ligand>
        <name>substrate</name>
    </ligand>
</feature>
<feature type="binding site" evidence="1">
    <location>
        <begin position="221"/>
        <end position="222"/>
    </location>
    <ligand>
        <name>substrate</name>
    </ligand>
</feature>
<feature type="site" description="Could be important to modulate the pK values of the two catalytic cysteine residues" evidence="1">
    <location>
        <position position="162"/>
    </location>
</feature>
<feature type="site" description="Could be important to modulate the pK values of the two catalytic cysteine residues" evidence="1">
    <location>
        <position position="211"/>
    </location>
</feature>
<proteinExistence type="inferred from homology"/>
<dbReference type="EC" id="5.1.1.7" evidence="1"/>
<dbReference type="EMBL" id="CP000860">
    <property type="protein sequence ID" value="ACA60106.1"/>
    <property type="molecule type" value="Genomic_DNA"/>
</dbReference>
<dbReference type="RefSeq" id="WP_012302687.1">
    <property type="nucleotide sequence ID" value="NC_010424.1"/>
</dbReference>
<dbReference type="SMR" id="B1I545"/>
<dbReference type="STRING" id="477974.Daud_1604"/>
<dbReference type="KEGG" id="dau:Daud_1604"/>
<dbReference type="eggNOG" id="COG0253">
    <property type="taxonomic scope" value="Bacteria"/>
</dbReference>
<dbReference type="HOGENOM" id="CLU_053306_3_0_9"/>
<dbReference type="OrthoDB" id="9805408at2"/>
<dbReference type="UniPathway" id="UPA00034">
    <property type="reaction ID" value="UER00025"/>
</dbReference>
<dbReference type="Proteomes" id="UP000008544">
    <property type="component" value="Chromosome"/>
</dbReference>
<dbReference type="GO" id="GO:0005829">
    <property type="term" value="C:cytosol"/>
    <property type="evidence" value="ECO:0007669"/>
    <property type="project" value="TreeGrafter"/>
</dbReference>
<dbReference type="GO" id="GO:0008837">
    <property type="term" value="F:diaminopimelate epimerase activity"/>
    <property type="evidence" value="ECO:0007669"/>
    <property type="project" value="UniProtKB-UniRule"/>
</dbReference>
<dbReference type="GO" id="GO:0009089">
    <property type="term" value="P:lysine biosynthetic process via diaminopimelate"/>
    <property type="evidence" value="ECO:0007669"/>
    <property type="project" value="UniProtKB-UniRule"/>
</dbReference>
<dbReference type="Gene3D" id="3.10.310.10">
    <property type="entry name" value="Diaminopimelate Epimerase, Chain A, domain 1"/>
    <property type="match status" value="2"/>
</dbReference>
<dbReference type="HAMAP" id="MF_00197">
    <property type="entry name" value="DAP_epimerase"/>
    <property type="match status" value="1"/>
</dbReference>
<dbReference type="InterPro" id="IPR018510">
    <property type="entry name" value="DAP_epimerase_AS"/>
</dbReference>
<dbReference type="InterPro" id="IPR001653">
    <property type="entry name" value="DAP_epimerase_DapF"/>
</dbReference>
<dbReference type="NCBIfam" id="TIGR00652">
    <property type="entry name" value="DapF"/>
    <property type="match status" value="1"/>
</dbReference>
<dbReference type="PANTHER" id="PTHR31689:SF0">
    <property type="entry name" value="DIAMINOPIMELATE EPIMERASE"/>
    <property type="match status" value="1"/>
</dbReference>
<dbReference type="PANTHER" id="PTHR31689">
    <property type="entry name" value="DIAMINOPIMELATE EPIMERASE, CHLOROPLASTIC"/>
    <property type="match status" value="1"/>
</dbReference>
<dbReference type="Pfam" id="PF01678">
    <property type="entry name" value="DAP_epimerase"/>
    <property type="match status" value="2"/>
</dbReference>
<dbReference type="SUPFAM" id="SSF54506">
    <property type="entry name" value="Diaminopimelate epimerase-like"/>
    <property type="match status" value="1"/>
</dbReference>
<dbReference type="PROSITE" id="PS01326">
    <property type="entry name" value="DAP_EPIMERASE"/>
    <property type="match status" value="1"/>
</dbReference>
<sequence length="278" mass="29718">MEFTKMHGLGNDFVIVNGFGQSLPDDPGALARRVCDRRLGVGADGLVLLLPSAAADLRMRVFNPDGSEPEMCGNAIRCVALYARRRGLVAKTQLEVETLAGLIRPEILLDGDRETVRVDMGRPRLERAEIPMRGPAGPVVGEVLDAGERSFMVTAVSMGNPHCVVFGADLDDAGFRKYGPLLEVHPAFPARTNVEFVEVLSPGEVAVRVWERGVGPTPACGTGACAVAVAGVLTGRTARRVHVRLPGGVLLIEWPDDAGPVYMSGPAEEVFDGKWVRA</sequence>
<reference key="1">
    <citation type="submission" date="2007-10" db="EMBL/GenBank/DDBJ databases">
        <title>Complete sequence of chromosome of Desulforudis audaxviator MP104C.</title>
        <authorList>
            <person name="Copeland A."/>
            <person name="Lucas S."/>
            <person name="Lapidus A."/>
            <person name="Barry K."/>
            <person name="Glavina del Rio T."/>
            <person name="Dalin E."/>
            <person name="Tice H."/>
            <person name="Bruce D."/>
            <person name="Pitluck S."/>
            <person name="Lowry S.R."/>
            <person name="Larimer F."/>
            <person name="Land M.L."/>
            <person name="Hauser L."/>
            <person name="Kyrpides N."/>
            <person name="Ivanova N.N."/>
            <person name="Richardson P."/>
        </authorList>
    </citation>
    <scope>NUCLEOTIDE SEQUENCE [LARGE SCALE GENOMIC DNA]</scope>
    <source>
        <strain>MP104C</strain>
    </source>
</reference>
<keyword id="KW-0028">Amino-acid biosynthesis</keyword>
<keyword id="KW-0963">Cytoplasm</keyword>
<keyword id="KW-0413">Isomerase</keyword>
<keyword id="KW-0457">Lysine biosynthesis</keyword>
<keyword id="KW-1185">Reference proteome</keyword>
<protein>
    <recommendedName>
        <fullName evidence="1">Diaminopimelate epimerase</fullName>
        <shortName evidence="1">DAP epimerase</shortName>
        <ecNumber evidence="1">5.1.1.7</ecNumber>
    </recommendedName>
    <alternativeName>
        <fullName evidence="1">PLP-independent amino acid racemase</fullName>
    </alternativeName>
</protein>
<gene>
    <name evidence="1" type="primary">dapF</name>
    <name type="ordered locus">Daud_1604</name>
</gene>
<name>DAPF_DESAP</name>